<dbReference type="EMBL" id="AB010072">
    <property type="protein sequence ID" value="BAB09722.1"/>
    <property type="molecule type" value="Genomic_DNA"/>
</dbReference>
<dbReference type="EMBL" id="CP002688">
    <property type="protein sequence ID" value="AED94653.1"/>
    <property type="molecule type" value="Genomic_DNA"/>
</dbReference>
<dbReference type="EMBL" id="BT030016">
    <property type="protein sequence ID" value="ABN04754.1"/>
    <property type="molecule type" value="mRNA"/>
</dbReference>
<dbReference type="RefSeq" id="NP_198936.1">
    <property type="nucleotide sequence ID" value="NM_123485.1"/>
</dbReference>
<dbReference type="SMR" id="Q9FLL0"/>
<dbReference type="FunCoup" id="Q9FLL0">
    <property type="interactions" value="61"/>
</dbReference>
<dbReference type="IntAct" id="Q9FLL0">
    <property type="interactions" value="23"/>
</dbReference>
<dbReference type="iPTMnet" id="Q9FLL0"/>
<dbReference type="PaxDb" id="3702-AT5G41200.1"/>
<dbReference type="EnsemblPlants" id="AT5G41200.1">
    <property type="protein sequence ID" value="AT5G41200.1"/>
    <property type="gene ID" value="AT5G41200"/>
</dbReference>
<dbReference type="GeneID" id="834122"/>
<dbReference type="Gramene" id="AT5G41200.1">
    <property type="protein sequence ID" value="AT5G41200.1"/>
    <property type="gene ID" value="AT5G41200"/>
</dbReference>
<dbReference type="KEGG" id="ath:AT5G41200"/>
<dbReference type="Araport" id="AT5G41200"/>
<dbReference type="TAIR" id="AT5G41200">
    <property type="gene designation" value="AGL75"/>
</dbReference>
<dbReference type="eggNOG" id="KOG0014">
    <property type="taxonomic scope" value="Eukaryota"/>
</dbReference>
<dbReference type="HOGENOM" id="CLU_053043_0_0_1"/>
<dbReference type="InParanoid" id="Q9FLL0"/>
<dbReference type="OMA" id="MQHELFG"/>
<dbReference type="OrthoDB" id="601557at2759"/>
<dbReference type="PhylomeDB" id="Q9FLL0"/>
<dbReference type="PRO" id="PR:Q9FLL0"/>
<dbReference type="Proteomes" id="UP000006548">
    <property type="component" value="Chromosome 5"/>
</dbReference>
<dbReference type="ExpressionAtlas" id="Q9FLL0">
    <property type="expression patterns" value="baseline"/>
</dbReference>
<dbReference type="GO" id="GO:0005634">
    <property type="term" value="C:nucleus"/>
    <property type="evidence" value="ECO:0007669"/>
    <property type="project" value="UniProtKB-SubCell"/>
</dbReference>
<dbReference type="GO" id="GO:0000987">
    <property type="term" value="F:cis-regulatory region sequence-specific DNA binding"/>
    <property type="evidence" value="ECO:0007669"/>
    <property type="project" value="InterPro"/>
</dbReference>
<dbReference type="GO" id="GO:0003700">
    <property type="term" value="F:DNA-binding transcription factor activity"/>
    <property type="evidence" value="ECO:0000250"/>
    <property type="project" value="TAIR"/>
</dbReference>
<dbReference type="GO" id="GO:0000981">
    <property type="term" value="F:DNA-binding transcription factor activity, RNA polymerase II-specific"/>
    <property type="evidence" value="ECO:0007669"/>
    <property type="project" value="InterPro"/>
</dbReference>
<dbReference type="GO" id="GO:0046983">
    <property type="term" value="F:protein dimerization activity"/>
    <property type="evidence" value="ECO:0007669"/>
    <property type="project" value="InterPro"/>
</dbReference>
<dbReference type="GO" id="GO:0045944">
    <property type="term" value="P:positive regulation of transcription by RNA polymerase II"/>
    <property type="evidence" value="ECO:0007669"/>
    <property type="project" value="InterPro"/>
</dbReference>
<dbReference type="CDD" id="cd00266">
    <property type="entry name" value="MADS_SRF_like"/>
    <property type="match status" value="1"/>
</dbReference>
<dbReference type="FunFam" id="3.40.1810.10:FF:000025">
    <property type="entry name" value="AGAMOUS-like 76"/>
    <property type="match status" value="1"/>
</dbReference>
<dbReference type="Gene3D" id="3.40.1810.10">
    <property type="entry name" value="Transcription factor, MADS-box"/>
    <property type="match status" value="1"/>
</dbReference>
<dbReference type="InterPro" id="IPR033897">
    <property type="entry name" value="SRF-like_MADS-box"/>
</dbReference>
<dbReference type="InterPro" id="IPR002100">
    <property type="entry name" value="TF_MADSbox"/>
</dbReference>
<dbReference type="InterPro" id="IPR036879">
    <property type="entry name" value="TF_MADSbox_sf"/>
</dbReference>
<dbReference type="Pfam" id="PF00319">
    <property type="entry name" value="SRF-TF"/>
    <property type="match status" value="1"/>
</dbReference>
<dbReference type="SMART" id="SM00432">
    <property type="entry name" value="MADS"/>
    <property type="match status" value="1"/>
</dbReference>
<dbReference type="SUPFAM" id="SSF55455">
    <property type="entry name" value="SRF-like"/>
    <property type="match status" value="1"/>
</dbReference>
<dbReference type="PROSITE" id="PS50066">
    <property type="entry name" value="MADS_BOX_2"/>
    <property type="match status" value="1"/>
</dbReference>
<comment type="function">
    <text evidence="4">Probable transcription factor that may function in the maintenance of the proper function of the central cell in pollen tube attraction.</text>
</comment>
<comment type="subunit">
    <text evidence="2">Interacts with MEE14/CBP1.</text>
</comment>
<comment type="subcellular location">
    <subcellularLocation>
        <location evidence="1">Nucleus</location>
    </subcellularLocation>
</comment>
<keyword id="KW-0238">DNA-binding</keyword>
<keyword id="KW-0539">Nucleus</keyword>
<keyword id="KW-1185">Reference proteome</keyword>
<keyword id="KW-0804">Transcription</keyword>
<keyword id="KW-0805">Transcription regulation</keyword>
<sequence>MTMRSSSPSSSSSYSLAFTSLSNRLETIFKKASELCTLCDIEACVIYYGPDGELKTWPKEKEKVRDIALRYSLLNEALRRKKSVNLHGFLNKKKNKGLKNPNKKMKTSLKNVNILKYPLADHYPPDQVSPLIQSLELHVSKFQERLRFLESQKQNQTKPDHQSLTPSSLNHYTQSLNPSQFSLFMYNHGDNTLSQIPVSASNFNQDYFSALLEESELKNQLMKPEICGYDQNQNMSMGDITNNKFQDPCVSNKEAVQESVNNFGLNQLMYKEFYGCDQNMSMGNINSNSFQNPCVSNTQHYSAVEESVKNPWLNQLMQNELYGYGYAGFC</sequence>
<name>AGL75_ARATH</name>
<organism>
    <name type="scientific">Arabidopsis thaliana</name>
    <name type="common">Mouse-ear cress</name>
    <dbReference type="NCBI Taxonomy" id="3702"/>
    <lineage>
        <taxon>Eukaryota</taxon>
        <taxon>Viridiplantae</taxon>
        <taxon>Streptophyta</taxon>
        <taxon>Embryophyta</taxon>
        <taxon>Tracheophyta</taxon>
        <taxon>Spermatophyta</taxon>
        <taxon>Magnoliopsida</taxon>
        <taxon>eudicotyledons</taxon>
        <taxon>Gunneridae</taxon>
        <taxon>Pentapetalae</taxon>
        <taxon>rosids</taxon>
        <taxon>malvids</taxon>
        <taxon>Brassicales</taxon>
        <taxon>Brassicaceae</taxon>
        <taxon>Camelineae</taxon>
        <taxon>Arabidopsis</taxon>
    </lineage>
</organism>
<accession>Q9FLL0</accession>
<gene>
    <name evidence="3" type="primary">AGL75</name>
    <name evidence="5" type="ordered locus">At5g41200</name>
    <name evidence="6" type="ORF">MEE6.27</name>
</gene>
<reference key="1">
    <citation type="journal article" date="1998" name="DNA Res.">
        <title>Structural analysis of Arabidopsis thaliana chromosome 5. IV. Sequence features of the regions of 1,456,315 bp covered by nineteen physically assigned P1 and TAC clones.</title>
        <authorList>
            <person name="Sato S."/>
            <person name="Kaneko T."/>
            <person name="Kotani H."/>
            <person name="Nakamura Y."/>
            <person name="Asamizu E."/>
            <person name="Miyajima N."/>
            <person name="Tabata S."/>
        </authorList>
    </citation>
    <scope>NUCLEOTIDE SEQUENCE [LARGE SCALE GENOMIC DNA]</scope>
    <source>
        <strain>cv. Columbia</strain>
    </source>
</reference>
<reference key="2">
    <citation type="journal article" date="2017" name="Plant J.">
        <title>Araport11: a complete reannotation of the Arabidopsis thaliana reference genome.</title>
        <authorList>
            <person name="Cheng C.Y."/>
            <person name="Krishnakumar V."/>
            <person name="Chan A.P."/>
            <person name="Thibaud-Nissen F."/>
            <person name="Schobel S."/>
            <person name="Town C.D."/>
        </authorList>
    </citation>
    <scope>GENOME REANNOTATION</scope>
    <source>
        <strain>cv. Columbia</strain>
    </source>
</reference>
<reference key="3">
    <citation type="submission" date="2007-01" db="EMBL/GenBank/DDBJ databases">
        <title>Arabidopsis ORF clones.</title>
        <authorList>
            <person name="Bautista V.R."/>
            <person name="Kim C.J."/>
            <person name="Chen H."/>
            <person name="Wu S.Y."/>
            <person name="De Los Reyes C."/>
            <person name="Ecker J.R."/>
        </authorList>
    </citation>
    <scope>NUCLEOTIDE SEQUENCE [LARGE SCALE MRNA]</scope>
    <source>
        <strain>cv. Columbia</strain>
    </source>
</reference>
<reference key="4">
    <citation type="journal article" date="2015" name="Plant Cell">
        <title>Arabidopsis CBP1 is a novel regulator of transcription initiation in central cell-mediated pollen tube guidance.</title>
        <authorList>
            <person name="Li H.J."/>
            <person name="Zhu S.S."/>
            <person name="Zhang M.X."/>
            <person name="Wang T."/>
            <person name="Liang L."/>
            <person name="Xue Y."/>
            <person name="Shi D.Q."/>
            <person name="Liu J."/>
            <person name="Yang W.C."/>
        </authorList>
    </citation>
    <scope>FUNCTION</scope>
    <scope>INTERACTION WITH ME14/CBP1</scope>
</reference>
<feature type="chain" id="PRO_0000435414" description="Agamous-like MADS-box protein AGL75">
    <location>
        <begin position="1"/>
        <end position="330"/>
    </location>
</feature>
<feature type="domain" description="MADS-box" evidence="1">
    <location>
        <begin position="19"/>
        <end position="61"/>
    </location>
</feature>
<proteinExistence type="evidence at protein level"/>
<evidence type="ECO:0000255" key="1">
    <source>
        <dbReference type="PROSITE-ProRule" id="PRU00251"/>
    </source>
</evidence>
<evidence type="ECO:0000269" key="2">
    <source>
    </source>
</evidence>
<evidence type="ECO:0000305" key="3"/>
<evidence type="ECO:0000305" key="4">
    <source>
    </source>
</evidence>
<evidence type="ECO:0000312" key="5">
    <source>
        <dbReference type="Araport" id="AT5G41200"/>
    </source>
</evidence>
<evidence type="ECO:0000312" key="6">
    <source>
        <dbReference type="EMBL" id="BAB09722.1"/>
    </source>
</evidence>
<protein>
    <recommendedName>
        <fullName evidence="3">Agamous-like MADS-box protein AGL75</fullName>
    </recommendedName>
</protein>